<comment type="function">
    <text evidence="2 3 4">Catalyzes the methyl esterification of L-isoaspartyl residues in peptides and proteins that result from spontaneous decomposition of normal L-aspartyl and L-asparaginyl residues. It plays a role in the repair and/or degradation of damaged proteins. Contributes to seed longevity and germination vigor by limiting the abnormal accumulation of the L-isoaspartyl residues in seed proteins.</text>
</comment>
<comment type="catalytic activity">
    <reaction evidence="2">
        <text>[protein]-L-isoaspartate + S-adenosyl-L-methionine = [protein]-L-isoaspartate alpha-methyl ester + S-adenosyl-L-homocysteine</text>
        <dbReference type="Rhea" id="RHEA:12705"/>
        <dbReference type="Rhea" id="RHEA-COMP:12143"/>
        <dbReference type="Rhea" id="RHEA-COMP:12144"/>
        <dbReference type="ChEBI" id="CHEBI:57856"/>
        <dbReference type="ChEBI" id="CHEBI:59789"/>
        <dbReference type="ChEBI" id="CHEBI:90596"/>
        <dbReference type="ChEBI" id="CHEBI:90598"/>
        <dbReference type="EC" id="2.1.1.77"/>
    </reaction>
</comment>
<comment type="biophysicochemical properties">
    <phDependence>
        <text evidence="4">Optimum pH is 7.0.</text>
    </phDependence>
</comment>
<comment type="subunit">
    <text evidence="1">Monomer.</text>
</comment>
<comment type="subcellular location">
    <subcellularLocation>
        <location evidence="2">Cytoplasm</location>
    </subcellularLocation>
</comment>
<comment type="tissue specificity">
    <text evidence="2 5">Expressed in roots, rosette leaves, stems, cauline leaves, flowers and developing seeds.</text>
</comment>
<comment type="induction">
    <text evidence="3">By abscisic acid (ABA).</text>
</comment>
<comment type="miscellaneous">
    <text evidence="7">Seeds over-expressing PIMT1 have reduced accumulation of L-isoaspartyl residues in seed proteins and increased seed longevity and germination vigor. Conversely, reduced PIMT1 expression is associated with an increase in the accumulation of L-isoaspartyl residues in proteins, leading to increased sensitivity to aging treatments and loss of seed vigor under stressful germination conditions (PubMed:19011119).</text>
</comment>
<comment type="similarity">
    <text evidence="6">Belongs to the methyltransferase superfamily. L-isoaspartyl/D-aspartyl protein methyltransferase family.</text>
</comment>
<dbReference type="EC" id="2.1.1.77"/>
<dbReference type="EMBL" id="U31288">
    <property type="protein sequence ID" value="AAC49279.1"/>
    <property type="molecule type" value="Genomic_DNA"/>
</dbReference>
<dbReference type="EMBL" id="AL049659">
    <property type="protein sequence ID" value="CAB41165.1"/>
    <property type="molecule type" value="Genomic_DNA"/>
</dbReference>
<dbReference type="EMBL" id="CP002686">
    <property type="protein sequence ID" value="AEE78401.1"/>
    <property type="molecule type" value="Genomic_DNA"/>
</dbReference>
<dbReference type="EMBL" id="CP002686">
    <property type="protein sequence ID" value="AEE78402.1"/>
    <property type="molecule type" value="Genomic_DNA"/>
</dbReference>
<dbReference type="EMBL" id="BT029372">
    <property type="protein sequence ID" value="ABK32186.1"/>
    <property type="molecule type" value="mRNA"/>
</dbReference>
<dbReference type="PIR" id="T06709">
    <property type="entry name" value="T06709"/>
</dbReference>
<dbReference type="RefSeq" id="NP_680112.2">
    <property type="nucleotide sequence ID" value="NM_148859.4"/>
</dbReference>
<dbReference type="RefSeq" id="NP_851013.2">
    <property type="nucleotide sequence ID" value="NM_180682.4"/>
</dbReference>
<dbReference type="SMR" id="Q42539"/>
<dbReference type="FunCoup" id="Q42539">
    <property type="interactions" value="2642"/>
</dbReference>
<dbReference type="STRING" id="3702.Q42539"/>
<dbReference type="iPTMnet" id="Q42539"/>
<dbReference type="PaxDb" id="3702-AT3G48330.1"/>
<dbReference type="ProteomicsDB" id="234953"/>
<dbReference type="EnsemblPlants" id="AT3G48330.1">
    <property type="protein sequence ID" value="AT3G48330.1"/>
    <property type="gene ID" value="AT3G48330"/>
</dbReference>
<dbReference type="EnsemblPlants" id="AT3G48330.2">
    <property type="protein sequence ID" value="AT3G48330.2"/>
    <property type="gene ID" value="AT3G48330"/>
</dbReference>
<dbReference type="GeneID" id="823991"/>
<dbReference type="Gramene" id="AT3G48330.1">
    <property type="protein sequence ID" value="AT3G48330.1"/>
    <property type="gene ID" value="AT3G48330"/>
</dbReference>
<dbReference type="Gramene" id="AT3G48330.2">
    <property type="protein sequence ID" value="AT3G48330.2"/>
    <property type="gene ID" value="AT3G48330"/>
</dbReference>
<dbReference type="KEGG" id="ath:AT3G48330"/>
<dbReference type="Araport" id="AT3G48330"/>
<dbReference type="TAIR" id="AT3G48330">
    <property type="gene designation" value="PIMT1"/>
</dbReference>
<dbReference type="eggNOG" id="KOG1661">
    <property type="taxonomic scope" value="Eukaryota"/>
</dbReference>
<dbReference type="HOGENOM" id="CLU_055432_0_2_1"/>
<dbReference type="InParanoid" id="Q42539"/>
<dbReference type="OMA" id="FWPCNSS"/>
<dbReference type="PhylomeDB" id="Q42539"/>
<dbReference type="PRO" id="PR:Q42539"/>
<dbReference type="Proteomes" id="UP000006548">
    <property type="component" value="Chromosome 3"/>
</dbReference>
<dbReference type="ExpressionAtlas" id="Q42539">
    <property type="expression patterns" value="baseline and differential"/>
</dbReference>
<dbReference type="GO" id="GO:0005737">
    <property type="term" value="C:cytoplasm"/>
    <property type="evidence" value="ECO:0000314"/>
    <property type="project" value="TAIR"/>
</dbReference>
<dbReference type="GO" id="GO:0004719">
    <property type="term" value="F:protein-L-isoaspartate (D-aspartate) O-methyltransferase activity"/>
    <property type="evidence" value="ECO:0000314"/>
    <property type="project" value="UniProtKB"/>
</dbReference>
<dbReference type="GO" id="GO:0032259">
    <property type="term" value="P:methylation"/>
    <property type="evidence" value="ECO:0007669"/>
    <property type="project" value="UniProtKB-KW"/>
</dbReference>
<dbReference type="GO" id="GO:0036211">
    <property type="term" value="P:protein modification process"/>
    <property type="evidence" value="ECO:0007669"/>
    <property type="project" value="InterPro"/>
</dbReference>
<dbReference type="GO" id="GO:0030091">
    <property type="term" value="P:protein repair"/>
    <property type="evidence" value="ECO:0000304"/>
    <property type="project" value="UniProtKB"/>
</dbReference>
<dbReference type="GO" id="GO:0009737">
    <property type="term" value="P:response to abscisic acid"/>
    <property type="evidence" value="ECO:0000270"/>
    <property type="project" value="TAIR"/>
</dbReference>
<dbReference type="GO" id="GO:0009651">
    <property type="term" value="P:response to salt stress"/>
    <property type="evidence" value="ECO:0000315"/>
    <property type="project" value="TAIR"/>
</dbReference>
<dbReference type="GO" id="GO:0009845">
    <property type="term" value="P:seed germination"/>
    <property type="evidence" value="ECO:0000315"/>
    <property type="project" value="TAIR"/>
</dbReference>
<dbReference type="CDD" id="cd02440">
    <property type="entry name" value="AdoMet_MTases"/>
    <property type="match status" value="1"/>
</dbReference>
<dbReference type="FunFam" id="3.40.50.150:FF:000027">
    <property type="entry name" value="Protein-L-isoaspartate O-methyltransferase"/>
    <property type="match status" value="1"/>
</dbReference>
<dbReference type="Gene3D" id="3.40.50.150">
    <property type="entry name" value="Vaccinia Virus protein VP39"/>
    <property type="match status" value="1"/>
</dbReference>
<dbReference type="InterPro" id="IPR000682">
    <property type="entry name" value="PCMT"/>
</dbReference>
<dbReference type="InterPro" id="IPR029063">
    <property type="entry name" value="SAM-dependent_MTases_sf"/>
</dbReference>
<dbReference type="NCBIfam" id="TIGR00080">
    <property type="entry name" value="pimt"/>
    <property type="match status" value="1"/>
</dbReference>
<dbReference type="PANTHER" id="PTHR11579">
    <property type="entry name" value="PROTEIN-L-ISOASPARTATE O-METHYLTRANSFERASE"/>
    <property type="match status" value="1"/>
</dbReference>
<dbReference type="PANTHER" id="PTHR11579:SF28">
    <property type="entry name" value="PROTEIN-L-ISOASPARTATE O-METHYLTRANSFERASE 1"/>
    <property type="match status" value="1"/>
</dbReference>
<dbReference type="Pfam" id="PF01135">
    <property type="entry name" value="PCMT"/>
    <property type="match status" value="1"/>
</dbReference>
<dbReference type="SUPFAM" id="SSF53335">
    <property type="entry name" value="S-adenosyl-L-methionine-dependent methyltransferases"/>
    <property type="match status" value="1"/>
</dbReference>
<dbReference type="PROSITE" id="PS01279">
    <property type="entry name" value="PCMT"/>
    <property type="match status" value="1"/>
</dbReference>
<organism>
    <name type="scientific">Arabidopsis thaliana</name>
    <name type="common">Mouse-ear cress</name>
    <dbReference type="NCBI Taxonomy" id="3702"/>
    <lineage>
        <taxon>Eukaryota</taxon>
        <taxon>Viridiplantae</taxon>
        <taxon>Streptophyta</taxon>
        <taxon>Embryophyta</taxon>
        <taxon>Tracheophyta</taxon>
        <taxon>Spermatophyta</taxon>
        <taxon>Magnoliopsida</taxon>
        <taxon>eudicotyledons</taxon>
        <taxon>Gunneridae</taxon>
        <taxon>Pentapetalae</taxon>
        <taxon>rosids</taxon>
        <taxon>malvids</taxon>
        <taxon>Brassicales</taxon>
        <taxon>Brassicaceae</taxon>
        <taxon>Camelineae</taxon>
        <taxon>Arabidopsis</taxon>
    </lineage>
</organism>
<name>PIMT1_ARATH</name>
<accession>Q42539</accession>
<accession>A0JQ02</accession>
<accession>Q9STL3</accession>
<keyword id="KW-0963">Cytoplasm</keyword>
<keyword id="KW-0489">Methyltransferase</keyword>
<keyword id="KW-1185">Reference proteome</keyword>
<keyword id="KW-0949">S-adenosyl-L-methionine</keyword>
<keyword id="KW-0808">Transferase</keyword>
<evidence type="ECO:0000250" key="1"/>
<evidence type="ECO:0000269" key="2">
    <source>
    </source>
</evidence>
<evidence type="ECO:0000269" key="3">
    <source>
    </source>
</evidence>
<evidence type="ECO:0000269" key="4">
    <source>
    </source>
</evidence>
<evidence type="ECO:0000269" key="5">
    <source>
    </source>
</evidence>
<evidence type="ECO:0000305" key="6"/>
<evidence type="ECO:0000305" key="7">
    <source>
    </source>
</evidence>
<feature type="chain" id="PRO_0000111882" description="Protein-L-isoaspartate O-methyltransferase 1">
    <location>
        <begin position="1"/>
        <end position="230"/>
    </location>
</feature>
<feature type="active site" evidence="1">
    <location>
        <position position="65"/>
    </location>
</feature>
<feature type="sequence conflict" description="In Ref. 2; CAB41165." evidence="6" ref="2">
    <original>G</original>
    <variation>R</variation>
    <location>
        <position position="140"/>
    </location>
</feature>
<proteinExistence type="evidence at protein level"/>
<sequence length="230" mass="24614">MKQFWSPSSINKNKAMVENLQNHGIVTSDEVAKAMEAVDRGVFVTDRSSAYVDSPMSIGYNVTISAPHMHAMCLQLLEKHLKPGMRVLDVGSGTGYLTACFAVMVGTEGRAIGVEHIPELVASSVKNIEASAASPFLKEGSLAVHVGDGRQGWAEFAPYDAIHVGAAAPEIPEALIDQLKPGGRLVIPVGNIFQDLQVVDKNSDGSVSIKDETSVRYVPLTSREAQLRGD</sequence>
<gene>
    <name type="primary">PIMT1</name>
    <name type="synonym">PCM</name>
    <name type="ordered locus">At3g48330</name>
    <name type="ORF">T29H11.150</name>
</gene>
<protein>
    <recommendedName>
        <fullName>Protein-L-isoaspartate O-methyltransferase 1</fullName>
        <shortName>AtPIMT1</shortName>
        <ecNumber>2.1.1.77</ecNumber>
    </recommendedName>
    <alternativeName>
        <fullName>L-isoaspartyl protein carboxyl methyltransferase</fullName>
    </alternativeName>
    <alternativeName>
        <fullName>Protein L-isoaspartyl methyltransferase</fullName>
    </alternativeName>
    <alternativeName>
        <fullName>Protein-beta-aspartate methyltransferase</fullName>
    </alternativeName>
</protein>
<reference key="1">
    <citation type="journal article" date="1996" name="Plant Mol. Biol.">
        <title>A distinctly regulated protein repair L-isoaspartylmethyltransferase from Arabidopsis thaliana.</title>
        <authorList>
            <person name="Mudgett M.B."/>
            <person name="Clarke S."/>
        </authorList>
    </citation>
    <scope>NUCLEOTIDE SEQUENCE [GENOMIC DNA]</scope>
    <scope>TISSUE SPECIFICITY</scope>
    <source>
        <strain>cv. Columbia</strain>
    </source>
</reference>
<reference key="2">
    <citation type="journal article" date="2000" name="Nature">
        <title>Sequence and analysis of chromosome 3 of the plant Arabidopsis thaliana.</title>
        <authorList>
            <person name="Salanoubat M."/>
            <person name="Lemcke K."/>
            <person name="Rieger M."/>
            <person name="Ansorge W."/>
            <person name="Unseld M."/>
            <person name="Fartmann B."/>
            <person name="Valle G."/>
            <person name="Bloecker H."/>
            <person name="Perez-Alonso M."/>
            <person name="Obermaier B."/>
            <person name="Delseny M."/>
            <person name="Boutry M."/>
            <person name="Grivell L.A."/>
            <person name="Mache R."/>
            <person name="Puigdomenech P."/>
            <person name="De Simone V."/>
            <person name="Choisne N."/>
            <person name="Artiguenave F."/>
            <person name="Robert C."/>
            <person name="Brottier P."/>
            <person name="Wincker P."/>
            <person name="Cattolico L."/>
            <person name="Weissenbach J."/>
            <person name="Saurin W."/>
            <person name="Quetier F."/>
            <person name="Schaefer M."/>
            <person name="Mueller-Auer S."/>
            <person name="Gabel C."/>
            <person name="Fuchs M."/>
            <person name="Benes V."/>
            <person name="Wurmbach E."/>
            <person name="Drzonek H."/>
            <person name="Erfle H."/>
            <person name="Jordan N."/>
            <person name="Bangert S."/>
            <person name="Wiedelmann R."/>
            <person name="Kranz H."/>
            <person name="Voss H."/>
            <person name="Holland R."/>
            <person name="Brandt P."/>
            <person name="Nyakatura G."/>
            <person name="Vezzi A."/>
            <person name="D'Angelo M."/>
            <person name="Pallavicini A."/>
            <person name="Toppo S."/>
            <person name="Simionati B."/>
            <person name="Conrad A."/>
            <person name="Hornischer K."/>
            <person name="Kauer G."/>
            <person name="Loehnert T.-H."/>
            <person name="Nordsiek G."/>
            <person name="Reichelt J."/>
            <person name="Scharfe M."/>
            <person name="Schoen O."/>
            <person name="Bargues M."/>
            <person name="Terol J."/>
            <person name="Climent J."/>
            <person name="Navarro P."/>
            <person name="Collado C."/>
            <person name="Perez-Perez A."/>
            <person name="Ottenwaelder B."/>
            <person name="Duchemin D."/>
            <person name="Cooke R."/>
            <person name="Laudie M."/>
            <person name="Berger-Llauro C."/>
            <person name="Purnelle B."/>
            <person name="Masuy D."/>
            <person name="de Haan M."/>
            <person name="Maarse A.C."/>
            <person name="Alcaraz J.-P."/>
            <person name="Cottet A."/>
            <person name="Casacuberta E."/>
            <person name="Monfort A."/>
            <person name="Argiriou A."/>
            <person name="Flores M."/>
            <person name="Liguori R."/>
            <person name="Vitale D."/>
            <person name="Mannhaupt G."/>
            <person name="Haase D."/>
            <person name="Schoof H."/>
            <person name="Rudd S."/>
            <person name="Zaccaria P."/>
            <person name="Mewes H.-W."/>
            <person name="Mayer K.F.X."/>
            <person name="Kaul S."/>
            <person name="Town C.D."/>
            <person name="Koo H.L."/>
            <person name="Tallon L.J."/>
            <person name="Jenkins J."/>
            <person name="Rooney T."/>
            <person name="Rizzo M."/>
            <person name="Walts A."/>
            <person name="Utterback T."/>
            <person name="Fujii C.Y."/>
            <person name="Shea T.P."/>
            <person name="Creasy T.H."/>
            <person name="Haas B."/>
            <person name="Maiti R."/>
            <person name="Wu D."/>
            <person name="Peterson J."/>
            <person name="Van Aken S."/>
            <person name="Pai G."/>
            <person name="Militscher J."/>
            <person name="Sellers P."/>
            <person name="Gill J.E."/>
            <person name="Feldblyum T.V."/>
            <person name="Preuss D."/>
            <person name="Lin X."/>
            <person name="Nierman W.C."/>
            <person name="Salzberg S.L."/>
            <person name="White O."/>
            <person name="Venter J.C."/>
            <person name="Fraser C.M."/>
            <person name="Kaneko T."/>
            <person name="Nakamura Y."/>
            <person name="Sato S."/>
            <person name="Kato T."/>
            <person name="Asamizu E."/>
            <person name="Sasamoto S."/>
            <person name="Kimura T."/>
            <person name="Idesawa K."/>
            <person name="Kawashima K."/>
            <person name="Kishida Y."/>
            <person name="Kiyokawa C."/>
            <person name="Kohara M."/>
            <person name="Matsumoto M."/>
            <person name="Matsuno A."/>
            <person name="Muraki A."/>
            <person name="Nakayama S."/>
            <person name="Nakazaki N."/>
            <person name="Shinpo S."/>
            <person name="Takeuchi C."/>
            <person name="Wada T."/>
            <person name="Watanabe A."/>
            <person name="Yamada M."/>
            <person name="Yasuda M."/>
            <person name="Tabata S."/>
        </authorList>
    </citation>
    <scope>NUCLEOTIDE SEQUENCE [LARGE SCALE GENOMIC DNA]</scope>
    <source>
        <strain>cv. Columbia</strain>
    </source>
</reference>
<reference key="3">
    <citation type="journal article" date="2017" name="Plant J.">
        <title>Araport11: a complete reannotation of the Arabidopsis thaliana reference genome.</title>
        <authorList>
            <person name="Cheng C.Y."/>
            <person name="Krishnakumar V."/>
            <person name="Chan A.P."/>
            <person name="Thibaud-Nissen F."/>
            <person name="Schobel S."/>
            <person name="Town C.D."/>
        </authorList>
    </citation>
    <scope>GENOME REANNOTATION</scope>
    <source>
        <strain>cv. Columbia</strain>
    </source>
</reference>
<reference key="4">
    <citation type="submission" date="2006-11" db="EMBL/GenBank/DDBJ databases">
        <title>Arabidopsis ORF clones.</title>
        <authorList>
            <person name="Bautista V.R."/>
            <person name="Kim C.J."/>
            <person name="Chen H."/>
            <person name="Quinitio C."/>
            <person name="Ecker J.R."/>
        </authorList>
    </citation>
    <scope>NUCLEOTIDE SEQUENCE [LARGE SCALE MRNA]</scope>
    <source>
        <strain>cv. Columbia</strain>
    </source>
</reference>
<reference key="5">
    <citation type="journal article" date="2004" name="Plant Physiol.">
        <title>A second protein L-isoaspartyl methyltransferase gene in Arabidopsis produces two transcripts whose products are sequestered in the nucleus.</title>
        <authorList>
            <person name="Xu Q."/>
            <person name="Belcastro M.P."/>
            <person name="Villa S.T."/>
            <person name="Dinkins R.D."/>
            <person name="Clarke S.G."/>
            <person name="Downie A.B."/>
        </authorList>
    </citation>
    <scope>FUNCTION</scope>
    <scope>CATALYTIC ACTIVITY</scope>
    <scope>SUBCELLULAR LOCATION</scope>
    <scope>TISSUE SPECIFICITY</scope>
</reference>
<reference key="6">
    <citation type="journal article" date="2006" name="Physiol. Plantarum">
        <title>Arabidopsis protein repair L-isoaspartyl methyltransferases: predominant activities at lethal temperatures.</title>
        <authorList>
            <person name="Villa S.T."/>
            <person name="Xu Q."/>
            <person name="Downie A.B."/>
            <person name="Clarke S.G."/>
        </authorList>
    </citation>
    <scope>FUNCTION</scope>
    <scope>BIOPHYSICOCHEMICAL PROPERTIES</scope>
</reference>
<reference key="7">
    <citation type="journal article" date="2008" name="Plant Cell">
        <title>Protein repair L-isoaspartyl methyltransferase 1 is involved in both seed longevity and germination vigor in Arabidopsis.</title>
        <authorList>
            <person name="Oge L."/>
            <person name="Bourdais G."/>
            <person name="Bove J."/>
            <person name="Collet B."/>
            <person name="Godin B."/>
            <person name="Granier F."/>
            <person name="Boutin J.P."/>
            <person name="Job D."/>
            <person name="Jullien M."/>
            <person name="Grappin P."/>
        </authorList>
    </citation>
    <scope>FUNCTION</scope>
    <scope>INDUCTION</scope>
</reference>